<dbReference type="EMBL" id="AE014296">
    <property type="protein sequence ID" value="AAF50252.1"/>
    <property type="molecule type" value="Genomic_DNA"/>
</dbReference>
<dbReference type="EMBL" id="AE014296">
    <property type="protein sequence ID" value="AGB94329.1"/>
    <property type="molecule type" value="Genomic_DNA"/>
</dbReference>
<dbReference type="EMBL" id="AY070669">
    <property type="protein sequence ID" value="AAL48140.1"/>
    <property type="molecule type" value="mRNA"/>
</dbReference>
<dbReference type="EMBL" id="AY070688">
    <property type="protein sequence ID" value="AAL48159.1"/>
    <property type="molecule type" value="mRNA"/>
</dbReference>
<dbReference type="EMBL" id="BT088839">
    <property type="protein sequence ID" value="ACS54291.1"/>
    <property type="molecule type" value="mRNA"/>
</dbReference>
<dbReference type="RefSeq" id="NP_001261634.1">
    <property type="nucleotide sequence ID" value="NM_001274705.1"/>
</dbReference>
<dbReference type="RefSeq" id="NP_648327.1">
    <property type="nucleotide sequence ID" value="NM_140070.3"/>
</dbReference>
<dbReference type="SMR" id="Q9VT04"/>
<dbReference type="FunCoup" id="Q9VT04">
    <property type="interactions" value="116"/>
</dbReference>
<dbReference type="IntAct" id="Q9VT04">
    <property type="interactions" value="54"/>
</dbReference>
<dbReference type="STRING" id="7227.FBpp0305997"/>
<dbReference type="TCDB" id="2.A.18.8.3">
    <property type="family name" value="the amino acid/auxin permease (aaap) family"/>
</dbReference>
<dbReference type="GlyCosmos" id="Q9VT04">
    <property type="glycosylation" value="1 site, No reported glycans"/>
</dbReference>
<dbReference type="GlyGen" id="Q9VT04">
    <property type="glycosylation" value="1 site"/>
</dbReference>
<dbReference type="PaxDb" id="7227-FBpp0076156"/>
<dbReference type="DNASU" id="39106"/>
<dbReference type="EnsemblMetazoa" id="FBtr0076427">
    <property type="protein sequence ID" value="FBpp0076156"/>
    <property type="gene ID" value="FBgn0036007"/>
</dbReference>
<dbReference type="EnsemblMetazoa" id="FBtr0333864">
    <property type="protein sequence ID" value="FBpp0305997"/>
    <property type="gene ID" value="FBgn0036007"/>
</dbReference>
<dbReference type="GeneID" id="39106"/>
<dbReference type="KEGG" id="dme:Dmel_CG3424"/>
<dbReference type="UCSC" id="CG3424-RA">
    <property type="organism name" value="d. melanogaster"/>
</dbReference>
<dbReference type="AGR" id="FB:FBgn0036007"/>
<dbReference type="CTD" id="39106"/>
<dbReference type="FlyBase" id="FBgn0036007">
    <property type="gene designation" value="path"/>
</dbReference>
<dbReference type="VEuPathDB" id="VectorBase:FBgn0036007"/>
<dbReference type="eggNOG" id="KOG1304">
    <property type="taxonomic scope" value="Eukaryota"/>
</dbReference>
<dbReference type="InParanoid" id="Q9VT04"/>
<dbReference type="OMA" id="MYSGLVM"/>
<dbReference type="OrthoDB" id="1684102at2759"/>
<dbReference type="Reactome" id="R-DME-352230">
    <property type="pathway name" value="Amino acid transport across the plasma membrane"/>
</dbReference>
<dbReference type="Reactome" id="R-DME-428559">
    <property type="pathway name" value="Proton-coupled neutral amino acid transporters"/>
</dbReference>
<dbReference type="Reactome" id="R-DME-71240">
    <property type="pathway name" value="Tryptophan catabolism"/>
</dbReference>
<dbReference type="BioGRID-ORCS" id="39106">
    <property type="hits" value="1 hit in 3 CRISPR screens"/>
</dbReference>
<dbReference type="ChiTaRS" id="path">
    <property type="organism name" value="fly"/>
</dbReference>
<dbReference type="GenomeRNAi" id="39106"/>
<dbReference type="PRO" id="PR:Q9VT04"/>
<dbReference type="Proteomes" id="UP000000803">
    <property type="component" value="Chromosome 3L"/>
</dbReference>
<dbReference type="Bgee" id="FBgn0036007">
    <property type="expression patterns" value="Expressed in nurse follicle cell (Drosophila) in ovary and 308 other cell types or tissues"/>
</dbReference>
<dbReference type="ExpressionAtlas" id="Q9VT04">
    <property type="expression patterns" value="baseline and differential"/>
</dbReference>
<dbReference type="GO" id="GO:0030424">
    <property type="term" value="C:axon"/>
    <property type="evidence" value="ECO:0000314"/>
    <property type="project" value="FlyBase"/>
</dbReference>
<dbReference type="GO" id="GO:0030425">
    <property type="term" value="C:dendrite"/>
    <property type="evidence" value="ECO:0000314"/>
    <property type="project" value="FlyBase"/>
</dbReference>
<dbReference type="GO" id="GO:0036019">
    <property type="term" value="C:endolysosome"/>
    <property type="evidence" value="ECO:0000314"/>
    <property type="project" value="FlyBase"/>
</dbReference>
<dbReference type="GO" id="GO:0031902">
    <property type="term" value="C:late endosome membrane"/>
    <property type="evidence" value="ECO:0007669"/>
    <property type="project" value="UniProtKB-SubCell"/>
</dbReference>
<dbReference type="GO" id="GO:0005765">
    <property type="term" value="C:lysosomal membrane"/>
    <property type="evidence" value="ECO:0007669"/>
    <property type="project" value="UniProtKB-SubCell"/>
</dbReference>
<dbReference type="GO" id="GO:0043025">
    <property type="term" value="C:neuronal cell body"/>
    <property type="evidence" value="ECO:0000314"/>
    <property type="project" value="FlyBase"/>
</dbReference>
<dbReference type="GO" id="GO:0031090">
    <property type="term" value="C:organelle membrane"/>
    <property type="evidence" value="ECO:0000314"/>
    <property type="project" value="FlyBase"/>
</dbReference>
<dbReference type="GO" id="GO:0043204">
    <property type="term" value="C:perikaryon"/>
    <property type="evidence" value="ECO:0007669"/>
    <property type="project" value="UniProtKB-SubCell"/>
</dbReference>
<dbReference type="GO" id="GO:0005886">
    <property type="term" value="C:plasma membrane"/>
    <property type="evidence" value="ECO:0000314"/>
    <property type="project" value="FlyBase"/>
</dbReference>
<dbReference type="GO" id="GO:0005774">
    <property type="term" value="C:vacuolar membrane"/>
    <property type="evidence" value="ECO:0000318"/>
    <property type="project" value="GO_Central"/>
</dbReference>
<dbReference type="GO" id="GO:0015171">
    <property type="term" value="F:amino acid transmembrane transporter activity"/>
    <property type="evidence" value="ECO:0000314"/>
    <property type="project" value="UniProtKB"/>
</dbReference>
<dbReference type="GO" id="GO:0015179">
    <property type="term" value="F:L-amino acid transmembrane transporter activity"/>
    <property type="evidence" value="ECO:0000318"/>
    <property type="project" value="GO_Central"/>
</dbReference>
<dbReference type="GO" id="GO:0003333">
    <property type="term" value="P:amino acid transmembrane transport"/>
    <property type="evidence" value="ECO:0000314"/>
    <property type="project" value="UniProtKB"/>
</dbReference>
<dbReference type="GO" id="GO:0097484">
    <property type="term" value="P:dendrite extension"/>
    <property type="evidence" value="ECO:0000315"/>
    <property type="project" value="FlyBase"/>
</dbReference>
<dbReference type="GO" id="GO:0048813">
    <property type="term" value="P:dendrite morphogenesis"/>
    <property type="evidence" value="ECO:0000315"/>
    <property type="project" value="FlyBase"/>
</dbReference>
<dbReference type="GO" id="GO:0032536">
    <property type="term" value="P:regulation of cell projection size"/>
    <property type="evidence" value="ECO:0000315"/>
    <property type="project" value="UniProtKB"/>
</dbReference>
<dbReference type="GO" id="GO:0040008">
    <property type="term" value="P:regulation of growth"/>
    <property type="evidence" value="ECO:0000315"/>
    <property type="project" value="FlyBase"/>
</dbReference>
<dbReference type="InterPro" id="IPR013057">
    <property type="entry name" value="AA_transpt_TM"/>
</dbReference>
<dbReference type="PANTHER" id="PTHR22950">
    <property type="entry name" value="AMINO ACID TRANSPORTER"/>
    <property type="match status" value="1"/>
</dbReference>
<dbReference type="PANTHER" id="PTHR22950:SF154">
    <property type="entry name" value="PROTON-COUPLED AMINO ACID TRANSPORTER-LIKE PROTEIN PATHETIC"/>
    <property type="match status" value="1"/>
</dbReference>
<dbReference type="Pfam" id="PF01490">
    <property type="entry name" value="Aa_trans"/>
    <property type="match status" value="1"/>
</dbReference>
<accession>Q9VT04</accession>
<keyword id="KW-0029">Amino-acid transport</keyword>
<keyword id="KW-1003">Cell membrane</keyword>
<keyword id="KW-0966">Cell projection</keyword>
<keyword id="KW-0963">Cytoplasm</keyword>
<keyword id="KW-0967">Endosome</keyword>
<keyword id="KW-0325">Glycoprotein</keyword>
<keyword id="KW-0341">Growth regulation</keyword>
<keyword id="KW-0458">Lysosome</keyword>
<keyword id="KW-0472">Membrane</keyword>
<keyword id="KW-0524">Neurogenesis</keyword>
<keyword id="KW-1185">Reference proteome</keyword>
<keyword id="KW-0812">Transmembrane</keyword>
<keyword id="KW-1133">Transmembrane helix</keyword>
<keyword id="KW-0813">Transport</keyword>
<organism evidence="12">
    <name type="scientific">Drosophila melanogaster</name>
    <name type="common">Fruit fly</name>
    <dbReference type="NCBI Taxonomy" id="7227"/>
    <lineage>
        <taxon>Eukaryota</taxon>
        <taxon>Metazoa</taxon>
        <taxon>Ecdysozoa</taxon>
        <taxon>Arthropoda</taxon>
        <taxon>Hexapoda</taxon>
        <taxon>Insecta</taxon>
        <taxon>Pterygota</taxon>
        <taxon>Neoptera</taxon>
        <taxon>Endopterygota</taxon>
        <taxon>Diptera</taxon>
        <taxon>Brachycera</taxon>
        <taxon>Muscomorpha</taxon>
        <taxon>Ephydroidea</taxon>
        <taxon>Drosophilidae</taxon>
        <taxon>Drosophila</taxon>
        <taxon>Sophophora</taxon>
    </lineage>
</organism>
<gene>
    <name evidence="11" type="primary">path</name>
    <name evidence="11" type="ORF">CG3424</name>
</gene>
<proteinExistence type="evidence at protein level"/>
<protein>
    <recommendedName>
        <fullName evidence="7">Proton-coupled amino acid transporter-like protein pathetic</fullName>
    </recommendedName>
</protein>
<comment type="function">
    <text evidence="3 4 5 6">Amino acid transporter which has pH-dependent electrogenic transport activity for alanine and glycine but not for proline (PubMed:15843412). Plays a role in positive regulation of growth by directly or indirectly modulating the effects of the TOR signaling pathway (PubMed:15843412, PubMed:22574197). Required in a cell-autonomous manner for dendrite growth in neurons with large dendrite arbors (PubMed:26063572, PubMed:26735916).</text>
</comment>
<comment type="subcellular location">
    <subcellularLocation>
        <location evidence="4 5">Cell membrane</location>
        <topology evidence="1">Multi-pass membrane protein</topology>
    </subcellularLocation>
    <subcellularLocation>
        <location evidence="4">Lysosome membrane</location>
        <topology evidence="1">Multi-pass membrane protein</topology>
    </subcellularLocation>
    <subcellularLocation>
        <location evidence="4">Late endosome membrane</location>
        <topology evidence="1">Multi-pass membrane protein</topology>
    </subcellularLocation>
    <subcellularLocation>
        <location evidence="5">Cell projection</location>
        <location evidence="5">Axon</location>
    </subcellularLocation>
    <subcellularLocation>
        <location evidence="5">Cell projection</location>
        <location evidence="5">Dendrite</location>
    </subcellularLocation>
    <subcellularLocation>
        <location evidence="5">Perikaryon</location>
    </subcellularLocation>
    <subcellularLocation>
        <location evidence="4">Cytoplasm</location>
    </subcellularLocation>
    <text evidence="5">Localizes to endolysosomes in class IV da neurons.</text>
</comment>
<comment type="tissue specificity">
    <text evidence="3 5 6">In third instar larvae, expressed at highest levels in the brain and digestive system with particularly high levels in surface glia of the brain (at protein level) (PubMed:26735916). In third instar larvae, expressed in all cells of the body wall (at protein level) (PubMed:26063572). Within the body wall of third instar larvae, most highly expressed in epithelial cells and sensory neurons (PubMed:26735916). Expressed at a similar level in all da neurons (at protein level). Widely expressed during embryonic and late larval stages. Levels are highly dynamic in embryogenesis with surges of expression in many structures, including muscle primordia, salivary glands, proventriculus, trachea and gonads. Expressed in all or most cells of larval imaginal disks. Expression is also particularly strong in the pouch and hinge regions of the wing disk and in the morphogenetic furrow of the eye disk (PubMed:15843412).</text>
</comment>
<comment type="disruption phenotype">
    <text evidence="5 6">Severe dendrite growth defects in class IV da neurons which normally have large dendrite arbors, moderate defects in class III neurons which normally have medium-sized dendrite arbors and no effect in class I or III neurons which normally have small dendrite arbors (PubMed:26063572). Induction of starvation response and altered protein homeostasis in class III and IV neurons (PubMed:26063572). Severe defects in axon growth with mutants showing no defects 48 hours after egg laying (AEL) but severe defects apparent by 120 hours AEL (PubMed:26735916).</text>
</comment>
<comment type="similarity">
    <text evidence="7">Belongs to the amino acid/polyamine transporter 2 family.</text>
</comment>
<sequence>MVNIVDSGSKHAPQEMEQFLPGEGKVMYKIQPRKSDTEQALAGNDFDPFALRDNPHPTTDNETLTHLLKASLGTGILGMPFAFMCSGLIMGIFSTIFTAFICTHCSYVLVKCGHKLYYRTRRTKMTFAEIAEAAFQKGPKWCRGFAPVAKFSILFGLFLTYFGTCSVYTVIVASNFEQLISYWTGTAVSLRMLICIMLVPLILIAWVPNLKYLAPVSMVANVFMGLGLGITFYYLVQDLPPVEERESVVWSTLPQFFSITIFAMEAIGVVMPLENNMKTPQSFLGICGVLSQGMSGVTLIYMLLGFLGYLRYGSATGESITLNLPIEEWPAQTVKVLISLAVYCTFGLQFFVCLEIIWDGIKEKCKKRPTLVNYVLRTVLVTAAVVLAVAVPTIGPFMGLIGAFCFSILGLIFPVVIELIVHWESGFGKYNWILWKNAIITLCGIGALVFGTQAAIKDIVKAYSNNENVGE</sequence>
<reference evidence="12" key="1">
    <citation type="journal article" date="2000" name="Science">
        <title>The genome sequence of Drosophila melanogaster.</title>
        <authorList>
            <person name="Adams M.D."/>
            <person name="Celniker S.E."/>
            <person name="Holt R.A."/>
            <person name="Evans C.A."/>
            <person name="Gocayne J.D."/>
            <person name="Amanatides P.G."/>
            <person name="Scherer S.E."/>
            <person name="Li P.W."/>
            <person name="Hoskins R.A."/>
            <person name="Galle R.F."/>
            <person name="George R.A."/>
            <person name="Lewis S.E."/>
            <person name="Richards S."/>
            <person name="Ashburner M."/>
            <person name="Henderson S.N."/>
            <person name="Sutton G.G."/>
            <person name="Wortman J.R."/>
            <person name="Yandell M.D."/>
            <person name="Zhang Q."/>
            <person name="Chen L.X."/>
            <person name="Brandon R.C."/>
            <person name="Rogers Y.-H.C."/>
            <person name="Blazej R.G."/>
            <person name="Champe M."/>
            <person name="Pfeiffer B.D."/>
            <person name="Wan K.H."/>
            <person name="Doyle C."/>
            <person name="Baxter E.G."/>
            <person name="Helt G."/>
            <person name="Nelson C.R."/>
            <person name="Miklos G.L.G."/>
            <person name="Abril J.F."/>
            <person name="Agbayani A."/>
            <person name="An H.-J."/>
            <person name="Andrews-Pfannkoch C."/>
            <person name="Baldwin D."/>
            <person name="Ballew R.M."/>
            <person name="Basu A."/>
            <person name="Baxendale J."/>
            <person name="Bayraktaroglu L."/>
            <person name="Beasley E.M."/>
            <person name="Beeson K.Y."/>
            <person name="Benos P.V."/>
            <person name="Berman B.P."/>
            <person name="Bhandari D."/>
            <person name="Bolshakov S."/>
            <person name="Borkova D."/>
            <person name="Botchan M.R."/>
            <person name="Bouck J."/>
            <person name="Brokstein P."/>
            <person name="Brottier P."/>
            <person name="Burtis K.C."/>
            <person name="Busam D.A."/>
            <person name="Butler H."/>
            <person name="Cadieu E."/>
            <person name="Center A."/>
            <person name="Chandra I."/>
            <person name="Cherry J.M."/>
            <person name="Cawley S."/>
            <person name="Dahlke C."/>
            <person name="Davenport L.B."/>
            <person name="Davies P."/>
            <person name="de Pablos B."/>
            <person name="Delcher A."/>
            <person name="Deng Z."/>
            <person name="Mays A.D."/>
            <person name="Dew I."/>
            <person name="Dietz S.M."/>
            <person name="Dodson K."/>
            <person name="Doup L.E."/>
            <person name="Downes M."/>
            <person name="Dugan-Rocha S."/>
            <person name="Dunkov B.C."/>
            <person name="Dunn P."/>
            <person name="Durbin K.J."/>
            <person name="Evangelista C.C."/>
            <person name="Ferraz C."/>
            <person name="Ferriera S."/>
            <person name="Fleischmann W."/>
            <person name="Fosler C."/>
            <person name="Gabrielian A.E."/>
            <person name="Garg N.S."/>
            <person name="Gelbart W.M."/>
            <person name="Glasser K."/>
            <person name="Glodek A."/>
            <person name="Gong F."/>
            <person name="Gorrell J.H."/>
            <person name="Gu Z."/>
            <person name="Guan P."/>
            <person name="Harris M."/>
            <person name="Harris N.L."/>
            <person name="Harvey D.A."/>
            <person name="Heiman T.J."/>
            <person name="Hernandez J.R."/>
            <person name="Houck J."/>
            <person name="Hostin D."/>
            <person name="Houston K.A."/>
            <person name="Howland T.J."/>
            <person name="Wei M.-H."/>
            <person name="Ibegwam C."/>
            <person name="Jalali M."/>
            <person name="Kalush F."/>
            <person name="Karpen G.H."/>
            <person name="Ke Z."/>
            <person name="Kennison J.A."/>
            <person name="Ketchum K.A."/>
            <person name="Kimmel B.E."/>
            <person name="Kodira C.D."/>
            <person name="Kraft C.L."/>
            <person name="Kravitz S."/>
            <person name="Kulp D."/>
            <person name="Lai Z."/>
            <person name="Lasko P."/>
            <person name="Lei Y."/>
            <person name="Levitsky A.A."/>
            <person name="Li J.H."/>
            <person name="Li Z."/>
            <person name="Liang Y."/>
            <person name="Lin X."/>
            <person name="Liu X."/>
            <person name="Mattei B."/>
            <person name="McIntosh T.C."/>
            <person name="McLeod M.P."/>
            <person name="McPherson D."/>
            <person name="Merkulov G."/>
            <person name="Milshina N.V."/>
            <person name="Mobarry C."/>
            <person name="Morris J."/>
            <person name="Moshrefi A."/>
            <person name="Mount S.M."/>
            <person name="Moy M."/>
            <person name="Murphy B."/>
            <person name="Murphy L."/>
            <person name="Muzny D.M."/>
            <person name="Nelson D.L."/>
            <person name="Nelson D.R."/>
            <person name="Nelson K.A."/>
            <person name="Nixon K."/>
            <person name="Nusskern D.R."/>
            <person name="Pacleb J.M."/>
            <person name="Palazzolo M."/>
            <person name="Pittman G.S."/>
            <person name="Pan S."/>
            <person name="Pollard J."/>
            <person name="Puri V."/>
            <person name="Reese M.G."/>
            <person name="Reinert K."/>
            <person name="Remington K."/>
            <person name="Saunders R.D.C."/>
            <person name="Scheeler F."/>
            <person name="Shen H."/>
            <person name="Shue B.C."/>
            <person name="Siden-Kiamos I."/>
            <person name="Simpson M."/>
            <person name="Skupski M.P."/>
            <person name="Smith T.J."/>
            <person name="Spier E."/>
            <person name="Spradling A.C."/>
            <person name="Stapleton M."/>
            <person name="Strong R."/>
            <person name="Sun E."/>
            <person name="Svirskas R."/>
            <person name="Tector C."/>
            <person name="Turner R."/>
            <person name="Venter E."/>
            <person name="Wang A.H."/>
            <person name="Wang X."/>
            <person name="Wang Z.-Y."/>
            <person name="Wassarman D.A."/>
            <person name="Weinstock G.M."/>
            <person name="Weissenbach J."/>
            <person name="Williams S.M."/>
            <person name="Woodage T."/>
            <person name="Worley K.C."/>
            <person name="Wu D."/>
            <person name="Yang S."/>
            <person name="Yao Q.A."/>
            <person name="Ye J."/>
            <person name="Yeh R.-F."/>
            <person name="Zaveri J.S."/>
            <person name="Zhan M."/>
            <person name="Zhang G."/>
            <person name="Zhao Q."/>
            <person name="Zheng L."/>
            <person name="Zheng X.H."/>
            <person name="Zhong F.N."/>
            <person name="Zhong W."/>
            <person name="Zhou X."/>
            <person name="Zhu S.C."/>
            <person name="Zhu X."/>
            <person name="Smith H.O."/>
            <person name="Gibbs R.A."/>
            <person name="Myers E.W."/>
            <person name="Rubin G.M."/>
            <person name="Venter J.C."/>
        </authorList>
    </citation>
    <scope>NUCLEOTIDE SEQUENCE [LARGE SCALE GENOMIC DNA]</scope>
    <source>
        <strain evidence="12">Berkeley</strain>
    </source>
</reference>
<reference evidence="12" key="2">
    <citation type="journal article" date="2002" name="Genome Biol.">
        <title>Annotation of the Drosophila melanogaster euchromatic genome: a systematic review.</title>
        <authorList>
            <person name="Misra S."/>
            <person name="Crosby M.A."/>
            <person name="Mungall C.J."/>
            <person name="Matthews B.B."/>
            <person name="Campbell K.S."/>
            <person name="Hradecky P."/>
            <person name="Huang Y."/>
            <person name="Kaminker J.S."/>
            <person name="Millburn G.H."/>
            <person name="Prochnik S.E."/>
            <person name="Smith C.D."/>
            <person name="Tupy J.L."/>
            <person name="Whitfield E.J."/>
            <person name="Bayraktaroglu L."/>
            <person name="Berman B.P."/>
            <person name="Bettencourt B.R."/>
            <person name="Celniker S.E."/>
            <person name="de Grey A.D.N.J."/>
            <person name="Drysdale R.A."/>
            <person name="Harris N.L."/>
            <person name="Richter J."/>
            <person name="Russo S."/>
            <person name="Schroeder A.J."/>
            <person name="Shu S.Q."/>
            <person name="Stapleton M."/>
            <person name="Yamada C."/>
            <person name="Ashburner M."/>
            <person name="Gelbart W.M."/>
            <person name="Rubin G.M."/>
            <person name="Lewis S.E."/>
        </authorList>
    </citation>
    <scope>GENOME REANNOTATION</scope>
    <source>
        <strain evidence="12">Berkeley</strain>
    </source>
</reference>
<reference evidence="8 9" key="3">
    <citation type="journal article" date="2002" name="Genome Biol.">
        <title>A Drosophila full-length cDNA resource.</title>
        <authorList>
            <person name="Stapleton M."/>
            <person name="Carlson J.W."/>
            <person name="Brokstein P."/>
            <person name="Yu C."/>
            <person name="Champe M."/>
            <person name="George R.A."/>
            <person name="Guarin H."/>
            <person name="Kronmiller B."/>
            <person name="Pacleb J.M."/>
            <person name="Park S."/>
            <person name="Wan K.H."/>
            <person name="Rubin G.M."/>
            <person name="Celniker S.E."/>
        </authorList>
    </citation>
    <scope>NUCLEOTIDE SEQUENCE [LARGE SCALE MRNA]</scope>
    <source>
        <strain evidence="8 9">Berkeley</strain>
        <tissue evidence="8 9">Head</tissue>
    </source>
</reference>
<reference evidence="10" key="4">
    <citation type="submission" date="2009-06" db="EMBL/GenBank/DDBJ databases">
        <authorList>
            <person name="Carlson J."/>
            <person name="Booth B."/>
            <person name="Frise E."/>
            <person name="Sandler J."/>
            <person name="Wan K."/>
            <person name="Yu C."/>
            <person name="Celniker S."/>
        </authorList>
    </citation>
    <scope>NUCLEOTIDE SEQUENCE [LARGE SCALE MRNA]</scope>
    <source>
        <strain evidence="10">Berkeley</strain>
    </source>
</reference>
<reference evidence="7" key="5">
    <citation type="journal article" date="2005" name="Development">
        <title>PAT-related amino acid transporters regulate growth via a novel mechanism that does not require bulk transport of amino acids.</title>
        <authorList>
            <person name="Goberdhan D.C."/>
            <person name="Meredith D."/>
            <person name="Boyd C.A."/>
            <person name="Wilson C."/>
        </authorList>
    </citation>
    <scope>FUNCTION</scope>
    <scope>TISSUE SPECIFICITY</scope>
</reference>
<reference evidence="7" key="6">
    <citation type="journal article" date="2012" name="PLoS ONE">
        <title>Proton-assisted amino acid transporter PAT1 complexes with Rag GTPases and activates TORC1 on late endosomal and lysosomal membranes.</title>
        <authorList>
            <person name="Oegmundsdottir M.H."/>
            <person name="Heublein S."/>
            <person name="Kazi S."/>
            <person name="Reynolds B."/>
            <person name="Visvalingam S.M."/>
            <person name="Shaw M.K."/>
            <person name="Goberdhan D.C."/>
        </authorList>
    </citation>
    <scope>FUNCTION</scope>
    <scope>SUBCELLULAR LOCATION</scope>
</reference>
<reference evidence="7" key="7">
    <citation type="journal article" date="2015" name="Fly">
        <title>Functions of the SLC36 transporter Pathetic in growth control.</title>
        <authorList>
            <person name="Lin W.Y."/>
            <person name="Williams C.R."/>
            <person name="Yan C."/>
            <person name="Parrish J.Z."/>
        </authorList>
    </citation>
    <scope>FUNCTION</scope>
    <scope>TISSUE SPECIFICITY</scope>
    <scope>DISRUPTION PHENOTYPE</scope>
</reference>
<reference evidence="7" key="8">
    <citation type="journal article" date="2015" name="Genes Dev.">
        <title>The SLC36 transporter Pathetic is required for extreme dendrite growth in Drosophila sensory neurons.</title>
        <authorList>
            <person name="Lin W.Y."/>
            <person name="Williams C."/>
            <person name="Yan C."/>
            <person name="Koledachkina T."/>
            <person name="Luedke K."/>
            <person name="Dalton J."/>
            <person name="Bloomsburg S."/>
            <person name="Morrison N."/>
            <person name="Duncan K.E."/>
            <person name="Kim C.C."/>
            <person name="Parrish J.Z."/>
        </authorList>
    </citation>
    <scope>FUNCTION</scope>
    <scope>SUBCELLULAR LOCATION</scope>
    <scope>TISSUE SPECIFICITY</scope>
    <scope>DISRUPTION PHENOTYPE</scope>
</reference>
<name>PATH_DROME</name>
<feature type="chain" id="PRO_0000436782" description="Proton-coupled amino acid transporter-like protein pathetic">
    <location>
        <begin position="1"/>
        <end position="471"/>
    </location>
</feature>
<feature type="transmembrane region" description="Helical" evidence="1">
    <location>
        <begin position="81"/>
        <end position="101"/>
    </location>
</feature>
<feature type="transmembrane region" description="Helical" evidence="1">
    <location>
        <begin position="153"/>
        <end position="173"/>
    </location>
</feature>
<feature type="transmembrane region" description="Helical" evidence="1">
    <location>
        <begin position="187"/>
        <end position="207"/>
    </location>
</feature>
<feature type="transmembrane region" description="Helical" evidence="1">
    <location>
        <begin position="216"/>
        <end position="236"/>
    </location>
</feature>
<feature type="transmembrane region" description="Helical" evidence="1">
    <location>
        <begin position="253"/>
        <end position="273"/>
    </location>
</feature>
<feature type="transmembrane region" description="Helical" evidence="1">
    <location>
        <begin position="283"/>
        <end position="303"/>
    </location>
</feature>
<feature type="transmembrane region" description="Helical" evidence="1">
    <location>
        <begin position="337"/>
        <end position="357"/>
    </location>
</feature>
<feature type="transmembrane region" description="Helical" evidence="1">
    <location>
        <begin position="375"/>
        <end position="395"/>
    </location>
</feature>
<feature type="transmembrane region" description="Helical" evidence="1">
    <location>
        <begin position="397"/>
        <end position="417"/>
    </location>
</feature>
<feature type="transmembrane region" description="Helical" evidence="1">
    <location>
        <begin position="432"/>
        <end position="452"/>
    </location>
</feature>
<feature type="glycosylation site" description="N-linked (GlcNAc...) asparagine" evidence="2">
    <location>
        <position position="61"/>
    </location>
</feature>
<evidence type="ECO:0000255" key="1"/>
<evidence type="ECO:0000255" key="2">
    <source>
        <dbReference type="PROSITE-ProRule" id="PRU00498"/>
    </source>
</evidence>
<evidence type="ECO:0000269" key="3">
    <source>
    </source>
</evidence>
<evidence type="ECO:0000269" key="4">
    <source>
    </source>
</evidence>
<evidence type="ECO:0000269" key="5">
    <source>
    </source>
</evidence>
<evidence type="ECO:0000269" key="6">
    <source>
    </source>
</evidence>
<evidence type="ECO:0000305" key="7"/>
<evidence type="ECO:0000312" key="8">
    <source>
        <dbReference type="EMBL" id="AAL48140.1"/>
    </source>
</evidence>
<evidence type="ECO:0000312" key="9">
    <source>
        <dbReference type="EMBL" id="AAL48159.1"/>
    </source>
</evidence>
<evidence type="ECO:0000312" key="10">
    <source>
        <dbReference type="EMBL" id="ACS54291.1"/>
    </source>
</evidence>
<evidence type="ECO:0000312" key="11">
    <source>
        <dbReference type="FlyBase" id="FBgn0036007"/>
    </source>
</evidence>
<evidence type="ECO:0000312" key="12">
    <source>
        <dbReference type="Proteomes" id="UP000000803"/>
    </source>
</evidence>